<keyword id="KW-0004">4Fe-4S</keyword>
<keyword id="KW-0997">Cell inner membrane</keyword>
<keyword id="KW-1003">Cell membrane</keyword>
<keyword id="KW-0408">Iron</keyword>
<keyword id="KW-0411">Iron-sulfur</keyword>
<keyword id="KW-0472">Membrane</keyword>
<keyword id="KW-0479">Metal-binding</keyword>
<keyword id="KW-0520">NAD</keyword>
<keyword id="KW-0874">Quinone</keyword>
<keyword id="KW-1185">Reference proteome</keyword>
<keyword id="KW-0677">Repeat</keyword>
<keyword id="KW-1278">Translocase</keyword>
<keyword id="KW-0830">Ubiquinone</keyword>
<feature type="chain" id="PRO_0000298492" description="NADH-quinone oxidoreductase subunit I">
    <location>
        <begin position="1"/>
        <end position="180"/>
    </location>
</feature>
<feature type="domain" description="4Fe-4S ferredoxin-type 1" evidence="1">
    <location>
        <begin position="50"/>
        <end position="80"/>
    </location>
</feature>
<feature type="domain" description="4Fe-4S ferredoxin-type 2" evidence="1">
    <location>
        <begin position="90"/>
        <end position="119"/>
    </location>
</feature>
<feature type="binding site" evidence="1">
    <location>
        <position position="60"/>
    </location>
    <ligand>
        <name>[4Fe-4S] cluster</name>
        <dbReference type="ChEBI" id="CHEBI:49883"/>
        <label>1</label>
    </ligand>
</feature>
<feature type="binding site" evidence="1">
    <location>
        <position position="63"/>
    </location>
    <ligand>
        <name>[4Fe-4S] cluster</name>
        <dbReference type="ChEBI" id="CHEBI:49883"/>
        <label>1</label>
    </ligand>
</feature>
<feature type="binding site" evidence="1">
    <location>
        <position position="66"/>
    </location>
    <ligand>
        <name>[4Fe-4S] cluster</name>
        <dbReference type="ChEBI" id="CHEBI:49883"/>
        <label>1</label>
    </ligand>
</feature>
<feature type="binding site" evidence="1">
    <location>
        <position position="70"/>
    </location>
    <ligand>
        <name>[4Fe-4S] cluster</name>
        <dbReference type="ChEBI" id="CHEBI:49883"/>
        <label>2</label>
    </ligand>
</feature>
<feature type="binding site" evidence="1">
    <location>
        <position position="99"/>
    </location>
    <ligand>
        <name>[4Fe-4S] cluster</name>
        <dbReference type="ChEBI" id="CHEBI:49883"/>
        <label>2</label>
    </ligand>
</feature>
<feature type="binding site" evidence="1">
    <location>
        <position position="102"/>
    </location>
    <ligand>
        <name>[4Fe-4S] cluster</name>
        <dbReference type="ChEBI" id="CHEBI:49883"/>
        <label>2</label>
    </ligand>
</feature>
<feature type="binding site" evidence="1">
    <location>
        <position position="105"/>
    </location>
    <ligand>
        <name>[4Fe-4S] cluster</name>
        <dbReference type="ChEBI" id="CHEBI:49883"/>
        <label>2</label>
    </ligand>
</feature>
<feature type="binding site" evidence="1">
    <location>
        <position position="109"/>
    </location>
    <ligand>
        <name>[4Fe-4S] cluster</name>
        <dbReference type="ChEBI" id="CHEBI:49883"/>
        <label>1</label>
    </ligand>
</feature>
<protein>
    <recommendedName>
        <fullName evidence="1">NADH-quinone oxidoreductase subunit I</fullName>
        <ecNumber evidence="1">7.1.1.-</ecNumber>
    </recommendedName>
    <alternativeName>
        <fullName evidence="1">NADH dehydrogenase I subunit I</fullName>
    </alternativeName>
    <alternativeName>
        <fullName evidence="1">NDH-1 subunit I</fullName>
    </alternativeName>
</protein>
<organism>
    <name type="scientific">Escherichia coli O1:K1 / APEC</name>
    <dbReference type="NCBI Taxonomy" id="405955"/>
    <lineage>
        <taxon>Bacteria</taxon>
        <taxon>Pseudomonadati</taxon>
        <taxon>Pseudomonadota</taxon>
        <taxon>Gammaproteobacteria</taxon>
        <taxon>Enterobacterales</taxon>
        <taxon>Enterobacteriaceae</taxon>
        <taxon>Escherichia</taxon>
    </lineage>
</organism>
<reference key="1">
    <citation type="journal article" date="2007" name="J. Bacteriol.">
        <title>The genome sequence of avian pathogenic Escherichia coli strain O1:K1:H7 shares strong similarities with human extraintestinal pathogenic E. coli genomes.</title>
        <authorList>
            <person name="Johnson T.J."/>
            <person name="Kariyawasam S."/>
            <person name="Wannemuehler Y."/>
            <person name="Mangiamele P."/>
            <person name="Johnson S.J."/>
            <person name="Doetkott C."/>
            <person name="Skyberg J.A."/>
            <person name="Lynne A.M."/>
            <person name="Johnson J.R."/>
            <person name="Nolan L.K."/>
        </authorList>
    </citation>
    <scope>NUCLEOTIDE SEQUENCE [LARGE SCALE GENOMIC DNA]</scope>
</reference>
<accession>A1ADC9</accession>
<proteinExistence type="inferred from homology"/>
<dbReference type="EC" id="7.1.1.-" evidence="1"/>
<dbReference type="EMBL" id="CP000468">
    <property type="protein sequence ID" value="ABJ01669.1"/>
    <property type="molecule type" value="Genomic_DNA"/>
</dbReference>
<dbReference type="RefSeq" id="WP_000172749.1">
    <property type="nucleotide sequence ID" value="NZ_CADILS010000025.1"/>
</dbReference>
<dbReference type="SMR" id="A1ADC9"/>
<dbReference type="GeneID" id="89517116"/>
<dbReference type="KEGG" id="ecv:APECO1_4284"/>
<dbReference type="HOGENOM" id="CLU_067218_4_3_6"/>
<dbReference type="Proteomes" id="UP000008216">
    <property type="component" value="Chromosome"/>
</dbReference>
<dbReference type="GO" id="GO:0005886">
    <property type="term" value="C:plasma membrane"/>
    <property type="evidence" value="ECO:0007669"/>
    <property type="project" value="UniProtKB-SubCell"/>
</dbReference>
<dbReference type="GO" id="GO:0051539">
    <property type="term" value="F:4 iron, 4 sulfur cluster binding"/>
    <property type="evidence" value="ECO:0007669"/>
    <property type="project" value="UniProtKB-KW"/>
</dbReference>
<dbReference type="GO" id="GO:0005506">
    <property type="term" value="F:iron ion binding"/>
    <property type="evidence" value="ECO:0007669"/>
    <property type="project" value="UniProtKB-UniRule"/>
</dbReference>
<dbReference type="GO" id="GO:0050136">
    <property type="term" value="F:NADH:ubiquinone reductase (non-electrogenic) activity"/>
    <property type="evidence" value="ECO:0007669"/>
    <property type="project" value="UniProtKB-UniRule"/>
</dbReference>
<dbReference type="GO" id="GO:0048038">
    <property type="term" value="F:quinone binding"/>
    <property type="evidence" value="ECO:0007669"/>
    <property type="project" value="UniProtKB-KW"/>
</dbReference>
<dbReference type="GO" id="GO:0009060">
    <property type="term" value="P:aerobic respiration"/>
    <property type="evidence" value="ECO:0007669"/>
    <property type="project" value="TreeGrafter"/>
</dbReference>
<dbReference type="FunFam" id="3.30.70.3270:FF:000002">
    <property type="entry name" value="NADH-quinone oxidoreductase subunit I"/>
    <property type="match status" value="1"/>
</dbReference>
<dbReference type="Gene3D" id="3.30.70.3270">
    <property type="match status" value="1"/>
</dbReference>
<dbReference type="HAMAP" id="MF_01351">
    <property type="entry name" value="NDH1_NuoI"/>
    <property type="match status" value="1"/>
</dbReference>
<dbReference type="InterPro" id="IPR017896">
    <property type="entry name" value="4Fe4S_Fe-S-bd"/>
</dbReference>
<dbReference type="InterPro" id="IPR017900">
    <property type="entry name" value="4Fe4S_Fe_S_CS"/>
</dbReference>
<dbReference type="InterPro" id="IPR010226">
    <property type="entry name" value="NADH_quinone_OxRdtase_chainI"/>
</dbReference>
<dbReference type="NCBIfam" id="TIGR01971">
    <property type="entry name" value="NuoI"/>
    <property type="match status" value="1"/>
</dbReference>
<dbReference type="NCBIfam" id="NF004536">
    <property type="entry name" value="PRK05888.1-1"/>
    <property type="match status" value="1"/>
</dbReference>
<dbReference type="PANTHER" id="PTHR10849:SF20">
    <property type="entry name" value="NADH DEHYDROGENASE [UBIQUINONE] IRON-SULFUR PROTEIN 8, MITOCHONDRIAL"/>
    <property type="match status" value="1"/>
</dbReference>
<dbReference type="PANTHER" id="PTHR10849">
    <property type="entry name" value="NADH DEHYDROGENASE UBIQUINONE IRON-SULFUR PROTEIN 8, MITOCHONDRIAL"/>
    <property type="match status" value="1"/>
</dbReference>
<dbReference type="Pfam" id="PF12838">
    <property type="entry name" value="Fer4_7"/>
    <property type="match status" value="1"/>
</dbReference>
<dbReference type="SUPFAM" id="SSF54862">
    <property type="entry name" value="4Fe-4S ferredoxins"/>
    <property type="match status" value="1"/>
</dbReference>
<dbReference type="PROSITE" id="PS00198">
    <property type="entry name" value="4FE4S_FER_1"/>
    <property type="match status" value="2"/>
</dbReference>
<dbReference type="PROSITE" id="PS51379">
    <property type="entry name" value="4FE4S_FER_2"/>
    <property type="match status" value="2"/>
</dbReference>
<evidence type="ECO:0000255" key="1">
    <source>
        <dbReference type="HAMAP-Rule" id="MF_01351"/>
    </source>
</evidence>
<name>NUOI_ECOK1</name>
<gene>
    <name evidence="1" type="primary">nuoI</name>
    <name type="ordered locus">Ecok1_21750</name>
    <name type="ORF">APECO1_4284</name>
</gene>
<sequence length="180" mass="20538">MTLKELLVGFGTQVRSIWMIGLHAFAKRETRMYPEEPVYLPPRYRGRIVLTRDPDGEERCVACNLCAVACPVGCISLQKAETKDGRWYPEFFRINFSRCIFCGLCEEACPTTAIQLTPDFEMGEYKRQDLVYEKEDLLISGPGKYPEYNFYRMAGMAIDGKDKGEAENEAKPIDVKSLLP</sequence>
<comment type="function">
    <text evidence="1">NDH-1 shuttles electrons from NADH, via FMN and iron-sulfur (Fe-S) centers, to quinones in the respiratory chain. The immediate electron acceptor for the enzyme in this species is believed to be ubiquinone. Couples the redox reaction to proton translocation (for every two electrons transferred, four hydrogen ions are translocated across the cytoplasmic membrane), and thus conserves the redox energy in a proton gradient.</text>
</comment>
<comment type="catalytic activity">
    <reaction evidence="1">
        <text>a quinone + NADH + 5 H(+)(in) = a quinol + NAD(+) + 4 H(+)(out)</text>
        <dbReference type="Rhea" id="RHEA:57888"/>
        <dbReference type="ChEBI" id="CHEBI:15378"/>
        <dbReference type="ChEBI" id="CHEBI:24646"/>
        <dbReference type="ChEBI" id="CHEBI:57540"/>
        <dbReference type="ChEBI" id="CHEBI:57945"/>
        <dbReference type="ChEBI" id="CHEBI:132124"/>
    </reaction>
</comment>
<comment type="cofactor">
    <cofactor evidence="1">
        <name>[4Fe-4S] cluster</name>
        <dbReference type="ChEBI" id="CHEBI:49883"/>
    </cofactor>
    <text evidence="1">Binds 2 [4Fe-4S] clusters per subunit.</text>
</comment>
<comment type="subunit">
    <text evidence="1">NDH-1 is composed of 13 different subunits. Subunits NuoA, H, J, K, L, M, N constitute the membrane sector of the complex.</text>
</comment>
<comment type="subcellular location">
    <subcellularLocation>
        <location evidence="1">Cell inner membrane</location>
        <topology evidence="1">Peripheral membrane protein</topology>
    </subcellularLocation>
</comment>
<comment type="similarity">
    <text evidence="1">Belongs to the complex I 23 kDa subunit family.</text>
</comment>